<proteinExistence type="evidence at protein level"/>
<reference key="1">
    <citation type="journal article" date="2004" name="Nat. Genet.">
        <title>Complete sequencing and characterization of 21,243 full-length human cDNAs.</title>
        <authorList>
            <person name="Ota T."/>
            <person name="Suzuki Y."/>
            <person name="Nishikawa T."/>
            <person name="Otsuki T."/>
            <person name="Sugiyama T."/>
            <person name="Irie R."/>
            <person name="Wakamatsu A."/>
            <person name="Hayashi K."/>
            <person name="Sato H."/>
            <person name="Nagai K."/>
            <person name="Kimura K."/>
            <person name="Makita H."/>
            <person name="Sekine M."/>
            <person name="Obayashi M."/>
            <person name="Nishi T."/>
            <person name="Shibahara T."/>
            <person name="Tanaka T."/>
            <person name="Ishii S."/>
            <person name="Yamamoto J."/>
            <person name="Saito K."/>
            <person name="Kawai Y."/>
            <person name="Isono Y."/>
            <person name="Nakamura Y."/>
            <person name="Nagahari K."/>
            <person name="Murakami K."/>
            <person name="Yasuda T."/>
            <person name="Iwayanagi T."/>
            <person name="Wagatsuma M."/>
            <person name="Shiratori A."/>
            <person name="Sudo H."/>
            <person name="Hosoiri T."/>
            <person name="Kaku Y."/>
            <person name="Kodaira H."/>
            <person name="Kondo H."/>
            <person name="Sugawara M."/>
            <person name="Takahashi M."/>
            <person name="Kanda K."/>
            <person name="Yokoi T."/>
            <person name="Furuya T."/>
            <person name="Kikkawa E."/>
            <person name="Omura Y."/>
            <person name="Abe K."/>
            <person name="Kamihara K."/>
            <person name="Katsuta N."/>
            <person name="Sato K."/>
            <person name="Tanikawa M."/>
            <person name="Yamazaki M."/>
            <person name="Ninomiya K."/>
            <person name="Ishibashi T."/>
            <person name="Yamashita H."/>
            <person name="Murakawa K."/>
            <person name="Fujimori K."/>
            <person name="Tanai H."/>
            <person name="Kimata M."/>
            <person name="Watanabe M."/>
            <person name="Hiraoka S."/>
            <person name="Chiba Y."/>
            <person name="Ishida S."/>
            <person name="Ono Y."/>
            <person name="Takiguchi S."/>
            <person name="Watanabe S."/>
            <person name="Yosida M."/>
            <person name="Hotuta T."/>
            <person name="Kusano J."/>
            <person name="Kanehori K."/>
            <person name="Takahashi-Fujii A."/>
            <person name="Hara H."/>
            <person name="Tanase T.-O."/>
            <person name="Nomura Y."/>
            <person name="Togiya S."/>
            <person name="Komai F."/>
            <person name="Hara R."/>
            <person name="Takeuchi K."/>
            <person name="Arita M."/>
            <person name="Imose N."/>
            <person name="Musashino K."/>
            <person name="Yuuki H."/>
            <person name="Oshima A."/>
            <person name="Sasaki N."/>
            <person name="Aotsuka S."/>
            <person name="Yoshikawa Y."/>
            <person name="Matsunawa H."/>
            <person name="Ichihara T."/>
            <person name="Shiohata N."/>
            <person name="Sano S."/>
            <person name="Moriya S."/>
            <person name="Momiyama H."/>
            <person name="Satoh N."/>
            <person name="Takami S."/>
            <person name="Terashima Y."/>
            <person name="Suzuki O."/>
            <person name="Nakagawa S."/>
            <person name="Senoh A."/>
            <person name="Mizoguchi H."/>
            <person name="Goto Y."/>
            <person name="Shimizu F."/>
            <person name="Wakebe H."/>
            <person name="Hishigaki H."/>
            <person name="Watanabe T."/>
            <person name="Sugiyama A."/>
            <person name="Takemoto M."/>
            <person name="Kawakami B."/>
            <person name="Yamazaki M."/>
            <person name="Watanabe K."/>
            <person name="Kumagai A."/>
            <person name="Itakura S."/>
            <person name="Fukuzumi Y."/>
            <person name="Fujimori Y."/>
            <person name="Komiyama M."/>
            <person name="Tashiro H."/>
            <person name="Tanigami A."/>
            <person name="Fujiwara T."/>
            <person name="Ono T."/>
            <person name="Yamada K."/>
            <person name="Fujii Y."/>
            <person name="Ozaki K."/>
            <person name="Hirao M."/>
            <person name="Ohmori Y."/>
            <person name="Kawabata A."/>
            <person name="Hikiji T."/>
            <person name="Kobatake N."/>
            <person name="Inagaki H."/>
            <person name="Ikema Y."/>
            <person name="Okamoto S."/>
            <person name="Okitani R."/>
            <person name="Kawakami T."/>
            <person name="Noguchi S."/>
            <person name="Itoh T."/>
            <person name="Shigeta K."/>
            <person name="Senba T."/>
            <person name="Matsumura K."/>
            <person name="Nakajima Y."/>
            <person name="Mizuno T."/>
            <person name="Morinaga M."/>
            <person name="Sasaki M."/>
            <person name="Togashi T."/>
            <person name="Oyama M."/>
            <person name="Hata H."/>
            <person name="Watanabe M."/>
            <person name="Komatsu T."/>
            <person name="Mizushima-Sugano J."/>
            <person name="Satoh T."/>
            <person name="Shirai Y."/>
            <person name="Takahashi Y."/>
            <person name="Nakagawa K."/>
            <person name="Okumura K."/>
            <person name="Nagase T."/>
            <person name="Nomura N."/>
            <person name="Kikuchi H."/>
            <person name="Masuho Y."/>
            <person name="Yamashita R."/>
            <person name="Nakai K."/>
            <person name="Yada T."/>
            <person name="Nakamura Y."/>
            <person name="Ohara O."/>
            <person name="Isogai T."/>
            <person name="Sugano S."/>
        </authorList>
    </citation>
    <scope>NUCLEOTIDE SEQUENCE [LARGE SCALE MRNA]</scope>
    <scope>VARIANT VAL-171</scope>
</reference>
<reference key="2">
    <citation type="journal article" date="2006" name="Nature">
        <title>The finished DNA sequence of human chromosome 12.</title>
        <authorList>
            <person name="Scherer S.E."/>
            <person name="Muzny D.M."/>
            <person name="Buhay C.J."/>
            <person name="Chen R."/>
            <person name="Cree A."/>
            <person name="Ding Y."/>
            <person name="Dugan-Rocha S."/>
            <person name="Gill R."/>
            <person name="Gunaratne P."/>
            <person name="Harris R.A."/>
            <person name="Hawes A.C."/>
            <person name="Hernandez J."/>
            <person name="Hodgson A.V."/>
            <person name="Hume J."/>
            <person name="Jackson A."/>
            <person name="Khan Z.M."/>
            <person name="Kovar-Smith C."/>
            <person name="Lewis L.R."/>
            <person name="Lozado R.J."/>
            <person name="Metzker M.L."/>
            <person name="Milosavljevic A."/>
            <person name="Miner G.R."/>
            <person name="Montgomery K.T."/>
            <person name="Morgan M.B."/>
            <person name="Nazareth L.V."/>
            <person name="Scott G."/>
            <person name="Sodergren E."/>
            <person name="Song X.-Z."/>
            <person name="Steffen D."/>
            <person name="Lovering R.C."/>
            <person name="Wheeler D.A."/>
            <person name="Worley K.C."/>
            <person name="Yuan Y."/>
            <person name="Zhang Z."/>
            <person name="Adams C.Q."/>
            <person name="Ansari-Lari M.A."/>
            <person name="Ayele M."/>
            <person name="Brown M.J."/>
            <person name="Chen G."/>
            <person name="Chen Z."/>
            <person name="Clerc-Blankenburg K.P."/>
            <person name="Davis C."/>
            <person name="Delgado O."/>
            <person name="Dinh H.H."/>
            <person name="Draper H."/>
            <person name="Gonzalez-Garay M.L."/>
            <person name="Havlak P."/>
            <person name="Jackson L.R."/>
            <person name="Jacob L.S."/>
            <person name="Kelly S.H."/>
            <person name="Li L."/>
            <person name="Li Z."/>
            <person name="Liu J."/>
            <person name="Liu W."/>
            <person name="Lu J."/>
            <person name="Maheshwari M."/>
            <person name="Nguyen B.-V."/>
            <person name="Okwuonu G.O."/>
            <person name="Pasternak S."/>
            <person name="Perez L.M."/>
            <person name="Plopper F.J.H."/>
            <person name="Santibanez J."/>
            <person name="Shen H."/>
            <person name="Tabor P.E."/>
            <person name="Verduzco D."/>
            <person name="Waldron L."/>
            <person name="Wang Q."/>
            <person name="Williams G.A."/>
            <person name="Zhang J."/>
            <person name="Zhou J."/>
            <person name="Allen C.C."/>
            <person name="Amin A.G."/>
            <person name="Anyalebechi V."/>
            <person name="Bailey M."/>
            <person name="Barbaria J.A."/>
            <person name="Bimage K.E."/>
            <person name="Bryant N.P."/>
            <person name="Burch P.E."/>
            <person name="Burkett C.E."/>
            <person name="Burrell K.L."/>
            <person name="Calderon E."/>
            <person name="Cardenas V."/>
            <person name="Carter K."/>
            <person name="Casias K."/>
            <person name="Cavazos I."/>
            <person name="Cavazos S.R."/>
            <person name="Ceasar H."/>
            <person name="Chacko J."/>
            <person name="Chan S.N."/>
            <person name="Chavez D."/>
            <person name="Christopoulos C."/>
            <person name="Chu J."/>
            <person name="Cockrell R."/>
            <person name="Cox C.D."/>
            <person name="Dang M."/>
            <person name="Dathorne S.R."/>
            <person name="David R."/>
            <person name="Davis C.M."/>
            <person name="Davy-Carroll L."/>
            <person name="Deshazo D.R."/>
            <person name="Donlin J.E."/>
            <person name="D'Souza L."/>
            <person name="Eaves K.A."/>
            <person name="Egan A."/>
            <person name="Emery-Cohen A.J."/>
            <person name="Escotto M."/>
            <person name="Flagg N."/>
            <person name="Forbes L.D."/>
            <person name="Gabisi A.M."/>
            <person name="Garza M."/>
            <person name="Hamilton C."/>
            <person name="Henderson N."/>
            <person name="Hernandez O."/>
            <person name="Hines S."/>
            <person name="Hogues M.E."/>
            <person name="Huang M."/>
            <person name="Idlebird D.G."/>
            <person name="Johnson R."/>
            <person name="Jolivet A."/>
            <person name="Jones S."/>
            <person name="Kagan R."/>
            <person name="King L.M."/>
            <person name="Leal B."/>
            <person name="Lebow H."/>
            <person name="Lee S."/>
            <person name="LeVan J.M."/>
            <person name="Lewis L.C."/>
            <person name="London P."/>
            <person name="Lorensuhewa L.M."/>
            <person name="Loulseged H."/>
            <person name="Lovett D.A."/>
            <person name="Lucier A."/>
            <person name="Lucier R.L."/>
            <person name="Ma J."/>
            <person name="Madu R.C."/>
            <person name="Mapua P."/>
            <person name="Martindale A.D."/>
            <person name="Martinez E."/>
            <person name="Massey E."/>
            <person name="Mawhiney S."/>
            <person name="Meador M.G."/>
            <person name="Mendez S."/>
            <person name="Mercado C."/>
            <person name="Mercado I.C."/>
            <person name="Merritt C.E."/>
            <person name="Miner Z.L."/>
            <person name="Minja E."/>
            <person name="Mitchell T."/>
            <person name="Mohabbat F."/>
            <person name="Mohabbat K."/>
            <person name="Montgomery B."/>
            <person name="Moore N."/>
            <person name="Morris S."/>
            <person name="Munidasa M."/>
            <person name="Ngo R.N."/>
            <person name="Nguyen N.B."/>
            <person name="Nickerson E."/>
            <person name="Nwaokelemeh O.O."/>
            <person name="Nwokenkwo S."/>
            <person name="Obregon M."/>
            <person name="Oguh M."/>
            <person name="Oragunye N."/>
            <person name="Oviedo R.J."/>
            <person name="Parish B.J."/>
            <person name="Parker D.N."/>
            <person name="Parrish J."/>
            <person name="Parks K.L."/>
            <person name="Paul H.A."/>
            <person name="Payton B.A."/>
            <person name="Perez A."/>
            <person name="Perrin W."/>
            <person name="Pickens A."/>
            <person name="Primus E.L."/>
            <person name="Pu L.-L."/>
            <person name="Puazo M."/>
            <person name="Quiles M.M."/>
            <person name="Quiroz J.B."/>
            <person name="Rabata D."/>
            <person name="Reeves K."/>
            <person name="Ruiz S.J."/>
            <person name="Shao H."/>
            <person name="Sisson I."/>
            <person name="Sonaike T."/>
            <person name="Sorelle R.P."/>
            <person name="Sutton A.E."/>
            <person name="Svatek A.F."/>
            <person name="Svetz L.A."/>
            <person name="Tamerisa K.S."/>
            <person name="Taylor T.R."/>
            <person name="Teague B."/>
            <person name="Thomas N."/>
            <person name="Thorn R.D."/>
            <person name="Trejos Z.Y."/>
            <person name="Trevino B.K."/>
            <person name="Ukegbu O.N."/>
            <person name="Urban J.B."/>
            <person name="Vasquez L.I."/>
            <person name="Vera V.A."/>
            <person name="Villasana D.M."/>
            <person name="Wang L."/>
            <person name="Ward-Moore S."/>
            <person name="Warren J.T."/>
            <person name="Wei X."/>
            <person name="White F."/>
            <person name="Williamson A.L."/>
            <person name="Wleczyk R."/>
            <person name="Wooden H.S."/>
            <person name="Wooden S.H."/>
            <person name="Yen J."/>
            <person name="Yoon L."/>
            <person name="Yoon V."/>
            <person name="Zorrilla S.E."/>
            <person name="Nelson D."/>
            <person name="Kucherlapati R."/>
            <person name="Weinstock G."/>
            <person name="Gibbs R.A."/>
        </authorList>
    </citation>
    <scope>NUCLEOTIDE SEQUENCE [LARGE SCALE GENOMIC DNA]</scope>
</reference>
<organism>
    <name type="scientific">Homo sapiens</name>
    <name type="common">Human</name>
    <dbReference type="NCBI Taxonomy" id="9606"/>
    <lineage>
        <taxon>Eukaryota</taxon>
        <taxon>Metazoa</taxon>
        <taxon>Chordata</taxon>
        <taxon>Craniata</taxon>
        <taxon>Vertebrata</taxon>
        <taxon>Euteleostomi</taxon>
        <taxon>Mammalia</taxon>
        <taxon>Eutheria</taxon>
        <taxon>Euarchontoglires</taxon>
        <taxon>Primates</taxon>
        <taxon>Haplorrhini</taxon>
        <taxon>Catarrhini</taxon>
        <taxon>Hominidae</taxon>
        <taxon>Homo</taxon>
    </lineage>
</organism>
<sequence length="339" mass="36555">MLPSAVAAHAGAYWDVVASSALLNLPAAPGFGNLGKSFLIENLLRVGGAPTPRLQPPAPHDPATALATAGAQLRPLPASPVPLKLCPAAEQVSPAGAPYGTRWAFQVLSPSADSARLPGRAPGDRDCTFQPSAPAPSKPFLLSTPPFYSACCGGSCRRPASSTAFPREESMLPLLTQDSNSKARRGILRRAVFSEDQRKALEKMFQKQKYISKTDRKKLAINLGLKESQVKIWFQNRRMKWRNSKEKEVLSNRCIQEVGLQEDPLSRSALGFPSPCPSIWDVPQQHSSPRWRENSPEPSERLIQESSGAPPPEANSLQGALYLCSEEEAGSKGVLTGAV</sequence>
<accession>Q6ZNG2</accession>
<feature type="chain" id="PRO_0000302849" description="Homeobox protein DBX2">
    <location>
        <begin position="1"/>
        <end position="339"/>
    </location>
</feature>
<feature type="DNA-binding region" description="Homeobox" evidence="1">
    <location>
        <begin position="186"/>
        <end position="245"/>
    </location>
</feature>
<feature type="region of interest" description="Disordered" evidence="2">
    <location>
        <begin position="282"/>
        <end position="318"/>
    </location>
</feature>
<feature type="compositionally biased region" description="Basic and acidic residues" evidence="2">
    <location>
        <begin position="290"/>
        <end position="303"/>
    </location>
</feature>
<feature type="sequence variant" id="VAR_034969" description="In dbSNP:rs2731038." evidence="3">
    <original>M</original>
    <variation>V</variation>
    <location>
        <position position="171"/>
    </location>
</feature>
<comment type="subcellular location">
    <subcellularLocation>
        <location evidence="1">Nucleus</location>
    </subcellularLocation>
</comment>
<comment type="similarity">
    <text evidence="4">Belongs to the H2.0 homeobox family.</text>
</comment>
<name>DBX2_HUMAN</name>
<dbReference type="EMBL" id="AK131230">
    <property type="protein sequence ID" value="BAD18413.1"/>
    <property type="molecule type" value="mRNA"/>
</dbReference>
<dbReference type="EMBL" id="AC008127">
    <property type="status" value="NOT_ANNOTATED_CDS"/>
    <property type="molecule type" value="Genomic_DNA"/>
</dbReference>
<dbReference type="EMBL" id="AC079033">
    <property type="status" value="NOT_ANNOTATED_CDS"/>
    <property type="molecule type" value="Genomic_DNA"/>
</dbReference>
<dbReference type="EMBL" id="AC089986">
    <property type="status" value="NOT_ANNOTATED_CDS"/>
    <property type="molecule type" value="Genomic_DNA"/>
</dbReference>
<dbReference type="CCDS" id="CCDS31781.1"/>
<dbReference type="RefSeq" id="NP_001004329.2">
    <property type="nucleotide sequence ID" value="NM_001004329.3"/>
</dbReference>
<dbReference type="SMR" id="Q6ZNG2"/>
<dbReference type="BioGRID" id="136293">
    <property type="interactions" value="10"/>
</dbReference>
<dbReference type="FunCoup" id="Q6ZNG2">
    <property type="interactions" value="338"/>
</dbReference>
<dbReference type="IntAct" id="Q6ZNG2">
    <property type="interactions" value="5"/>
</dbReference>
<dbReference type="STRING" id="9606.ENSP00000331470"/>
<dbReference type="GlyGen" id="Q6ZNG2">
    <property type="glycosylation" value="1 site"/>
</dbReference>
<dbReference type="iPTMnet" id="Q6ZNG2"/>
<dbReference type="PhosphoSitePlus" id="Q6ZNG2"/>
<dbReference type="BioMuta" id="DBX2"/>
<dbReference type="DMDM" id="296434473"/>
<dbReference type="MassIVE" id="Q6ZNG2"/>
<dbReference type="PaxDb" id="9606-ENSP00000331470"/>
<dbReference type="PeptideAtlas" id="Q6ZNG2"/>
<dbReference type="Antibodypedia" id="25226">
    <property type="antibodies" value="143 antibodies from 23 providers"/>
</dbReference>
<dbReference type="DNASU" id="440097"/>
<dbReference type="Ensembl" id="ENST00000332700.6">
    <property type="protein sequence ID" value="ENSP00000331470.6"/>
    <property type="gene ID" value="ENSG00000185610.6"/>
</dbReference>
<dbReference type="GeneID" id="440097"/>
<dbReference type="KEGG" id="hsa:440097"/>
<dbReference type="MANE-Select" id="ENST00000332700.6">
    <property type="protein sequence ID" value="ENSP00000331470.6"/>
    <property type="RefSeq nucleotide sequence ID" value="NM_001004329.3"/>
    <property type="RefSeq protein sequence ID" value="NP_001004329.2"/>
</dbReference>
<dbReference type="UCSC" id="uc001rok.2">
    <property type="organism name" value="human"/>
</dbReference>
<dbReference type="AGR" id="HGNC:33186"/>
<dbReference type="CTD" id="440097"/>
<dbReference type="DisGeNET" id="440097"/>
<dbReference type="GeneCards" id="DBX2"/>
<dbReference type="HGNC" id="HGNC:33186">
    <property type="gene designation" value="DBX2"/>
</dbReference>
<dbReference type="HPA" id="ENSG00000185610">
    <property type="expression patterns" value="Tissue enriched (brain)"/>
</dbReference>
<dbReference type="MalaCards" id="DBX2"/>
<dbReference type="MIM" id="620706">
    <property type="type" value="gene"/>
</dbReference>
<dbReference type="neXtProt" id="NX_Q6ZNG2"/>
<dbReference type="OpenTargets" id="ENSG00000185610"/>
<dbReference type="PharmGKB" id="PA162383249"/>
<dbReference type="VEuPathDB" id="HostDB:ENSG00000185610"/>
<dbReference type="eggNOG" id="KOG0488">
    <property type="taxonomic scope" value="Eukaryota"/>
</dbReference>
<dbReference type="GeneTree" id="ENSGT00950000183093"/>
<dbReference type="HOGENOM" id="CLU_053401_2_0_1"/>
<dbReference type="InParanoid" id="Q6ZNG2"/>
<dbReference type="OMA" id="FPARWAF"/>
<dbReference type="OrthoDB" id="6159439at2759"/>
<dbReference type="PAN-GO" id="Q6ZNG2">
    <property type="GO annotations" value="1 GO annotation based on evolutionary models"/>
</dbReference>
<dbReference type="PhylomeDB" id="Q6ZNG2"/>
<dbReference type="TreeFam" id="TF350735"/>
<dbReference type="PathwayCommons" id="Q6ZNG2"/>
<dbReference type="SignaLink" id="Q6ZNG2"/>
<dbReference type="BioGRID-ORCS" id="440097">
    <property type="hits" value="9 hits in 1172 CRISPR screens"/>
</dbReference>
<dbReference type="GeneWiki" id="DBX2"/>
<dbReference type="GenomeRNAi" id="440097"/>
<dbReference type="Pharos" id="Q6ZNG2">
    <property type="development level" value="Tbio"/>
</dbReference>
<dbReference type="PRO" id="PR:Q6ZNG2"/>
<dbReference type="Proteomes" id="UP000005640">
    <property type="component" value="Chromosome 12"/>
</dbReference>
<dbReference type="RNAct" id="Q6ZNG2">
    <property type="molecule type" value="protein"/>
</dbReference>
<dbReference type="Bgee" id="ENSG00000185610">
    <property type="expression patterns" value="Expressed in male germ line stem cell (sensu Vertebrata) in testis and 42 other cell types or tissues"/>
</dbReference>
<dbReference type="GO" id="GO:0000785">
    <property type="term" value="C:chromatin"/>
    <property type="evidence" value="ECO:0000247"/>
    <property type="project" value="NTNU_SB"/>
</dbReference>
<dbReference type="GO" id="GO:0005634">
    <property type="term" value="C:nucleus"/>
    <property type="evidence" value="ECO:0007669"/>
    <property type="project" value="UniProtKB-SubCell"/>
</dbReference>
<dbReference type="GO" id="GO:0003677">
    <property type="term" value="F:DNA binding"/>
    <property type="evidence" value="ECO:0007669"/>
    <property type="project" value="UniProtKB-KW"/>
</dbReference>
<dbReference type="GO" id="GO:0000981">
    <property type="term" value="F:DNA-binding transcription factor activity, RNA polymerase II-specific"/>
    <property type="evidence" value="ECO:0000247"/>
    <property type="project" value="NTNU_SB"/>
</dbReference>
<dbReference type="GO" id="GO:0007173">
    <property type="term" value="P:epidermal growth factor receptor signaling pathway"/>
    <property type="evidence" value="ECO:0007669"/>
    <property type="project" value="Ensembl"/>
</dbReference>
<dbReference type="GO" id="GO:0000086">
    <property type="term" value="P:G2/M transition of mitotic cell cycle"/>
    <property type="evidence" value="ECO:0007669"/>
    <property type="project" value="Ensembl"/>
</dbReference>
<dbReference type="GO" id="GO:0010467">
    <property type="term" value="P:gene expression"/>
    <property type="evidence" value="ECO:0007669"/>
    <property type="project" value="Ensembl"/>
</dbReference>
<dbReference type="GO" id="GO:0061351">
    <property type="term" value="P:neural precursor cell proliferation"/>
    <property type="evidence" value="ECO:0007669"/>
    <property type="project" value="Ensembl"/>
</dbReference>
<dbReference type="GO" id="GO:0006357">
    <property type="term" value="P:regulation of transcription by RNA polymerase II"/>
    <property type="evidence" value="ECO:0000318"/>
    <property type="project" value="GO_Central"/>
</dbReference>
<dbReference type="CDD" id="cd00086">
    <property type="entry name" value="homeodomain"/>
    <property type="match status" value="1"/>
</dbReference>
<dbReference type="FunFam" id="1.10.10.60:FF:000187">
    <property type="entry name" value="homeobox protein DBX2"/>
    <property type="match status" value="1"/>
</dbReference>
<dbReference type="Gene3D" id="1.10.10.60">
    <property type="entry name" value="Homeodomain-like"/>
    <property type="match status" value="1"/>
</dbReference>
<dbReference type="InterPro" id="IPR051662">
    <property type="entry name" value="H2.0_Homeobox_NeuralPatt"/>
</dbReference>
<dbReference type="InterPro" id="IPR001356">
    <property type="entry name" value="HD"/>
</dbReference>
<dbReference type="InterPro" id="IPR020479">
    <property type="entry name" value="HD_metazoa"/>
</dbReference>
<dbReference type="InterPro" id="IPR017970">
    <property type="entry name" value="Homeobox_CS"/>
</dbReference>
<dbReference type="InterPro" id="IPR009057">
    <property type="entry name" value="Homeodomain-like_sf"/>
</dbReference>
<dbReference type="InterPro" id="IPR000047">
    <property type="entry name" value="HTH_motif"/>
</dbReference>
<dbReference type="PANTHER" id="PTHR24331">
    <property type="entry name" value="DBX"/>
    <property type="match status" value="1"/>
</dbReference>
<dbReference type="PANTHER" id="PTHR24331:SF4">
    <property type="entry name" value="HOMEOBOX PROTEIN DBX2"/>
    <property type="match status" value="1"/>
</dbReference>
<dbReference type="Pfam" id="PF00046">
    <property type="entry name" value="Homeodomain"/>
    <property type="match status" value="1"/>
</dbReference>
<dbReference type="PRINTS" id="PR00024">
    <property type="entry name" value="HOMEOBOX"/>
</dbReference>
<dbReference type="PRINTS" id="PR00031">
    <property type="entry name" value="HTHREPRESSR"/>
</dbReference>
<dbReference type="SMART" id="SM00389">
    <property type="entry name" value="HOX"/>
    <property type="match status" value="1"/>
</dbReference>
<dbReference type="SUPFAM" id="SSF46689">
    <property type="entry name" value="Homeodomain-like"/>
    <property type="match status" value="1"/>
</dbReference>
<dbReference type="PROSITE" id="PS00027">
    <property type="entry name" value="HOMEOBOX_1"/>
    <property type="match status" value="1"/>
</dbReference>
<dbReference type="PROSITE" id="PS50071">
    <property type="entry name" value="HOMEOBOX_2"/>
    <property type="match status" value="1"/>
</dbReference>
<keyword id="KW-0238">DNA-binding</keyword>
<keyword id="KW-0371">Homeobox</keyword>
<keyword id="KW-0539">Nucleus</keyword>
<keyword id="KW-1267">Proteomics identification</keyword>
<keyword id="KW-1185">Reference proteome</keyword>
<evidence type="ECO:0000255" key="1">
    <source>
        <dbReference type="PROSITE-ProRule" id="PRU00108"/>
    </source>
</evidence>
<evidence type="ECO:0000256" key="2">
    <source>
        <dbReference type="SAM" id="MobiDB-lite"/>
    </source>
</evidence>
<evidence type="ECO:0000269" key="3">
    <source>
    </source>
</evidence>
<evidence type="ECO:0000305" key="4"/>
<gene>
    <name type="primary">DBX2</name>
</gene>
<protein>
    <recommendedName>
        <fullName>Homeobox protein DBX2</fullName>
    </recommendedName>
    <alternativeName>
        <fullName>Developing brain homeobox protein 2</fullName>
    </alternativeName>
</protein>